<organism>
    <name type="scientific">Xenopus tropicalis</name>
    <name type="common">Western clawed frog</name>
    <name type="synonym">Silurana tropicalis</name>
    <dbReference type="NCBI Taxonomy" id="8364"/>
    <lineage>
        <taxon>Eukaryota</taxon>
        <taxon>Metazoa</taxon>
        <taxon>Chordata</taxon>
        <taxon>Craniata</taxon>
        <taxon>Vertebrata</taxon>
        <taxon>Euteleostomi</taxon>
        <taxon>Amphibia</taxon>
        <taxon>Batrachia</taxon>
        <taxon>Anura</taxon>
        <taxon>Pipoidea</taxon>
        <taxon>Pipidae</taxon>
        <taxon>Xenopodinae</taxon>
        <taxon>Xenopus</taxon>
        <taxon>Silurana</taxon>
    </lineage>
</organism>
<feature type="chain" id="PRO_0000397915" description="mRNA decay activator protein ZFP36L2">
    <location>
        <begin position="1"/>
        <end position="362"/>
    </location>
</feature>
<feature type="zinc finger region" description="C3H1-type 1" evidence="5">
    <location>
        <begin position="130"/>
        <end position="158"/>
    </location>
</feature>
<feature type="zinc finger region" description="C3H1-type 2" evidence="5">
    <location>
        <begin position="168"/>
        <end position="196"/>
    </location>
</feature>
<feature type="region of interest" description="Disordered" evidence="6">
    <location>
        <begin position="100"/>
        <end position="126"/>
    </location>
</feature>
<feature type="region of interest" description="RNA-binding" evidence="2">
    <location>
        <begin position="147"/>
        <end position="188"/>
    </location>
</feature>
<feature type="region of interest" description="Disordered" evidence="6">
    <location>
        <begin position="225"/>
        <end position="244"/>
    </location>
</feature>
<feature type="region of interest" description="Disordered" evidence="6">
    <location>
        <begin position="306"/>
        <end position="362"/>
    </location>
</feature>
<feature type="short sequence motif" description="RNA-binding" evidence="2">
    <location>
        <begin position="130"/>
        <end position="135"/>
    </location>
</feature>
<feature type="compositionally biased region" description="Basic and acidic residues" evidence="6">
    <location>
        <begin position="100"/>
        <end position="109"/>
    </location>
</feature>
<feature type="compositionally biased region" description="Low complexity" evidence="6">
    <location>
        <begin position="111"/>
        <end position="120"/>
    </location>
</feature>
<feature type="compositionally biased region" description="Low complexity" evidence="6">
    <location>
        <begin position="327"/>
        <end position="346"/>
    </location>
</feature>
<feature type="sequence conflict" description="In Ref. 2; AAI36092." evidence="7" ref="2">
    <original>F</original>
    <variation>L</variation>
    <location>
        <position position="191"/>
    </location>
</feature>
<gene>
    <name type="primary">zfp36l2</name>
</gene>
<proteinExistence type="evidence at transcript level"/>
<reference key="1">
    <citation type="journal article" date="2010" name="Science">
        <title>The genome of the Western clawed frog Xenopus tropicalis.</title>
        <authorList>
            <person name="Hellsten U."/>
            <person name="Harland R.M."/>
            <person name="Gilchrist M.J."/>
            <person name="Hendrix D."/>
            <person name="Jurka J."/>
            <person name="Kapitonov V."/>
            <person name="Ovcharenko I."/>
            <person name="Putnam N.H."/>
            <person name="Shu S."/>
            <person name="Taher L."/>
            <person name="Blitz I.L."/>
            <person name="Blumberg B."/>
            <person name="Dichmann D.S."/>
            <person name="Dubchak I."/>
            <person name="Amaya E."/>
            <person name="Detter J.C."/>
            <person name="Fletcher R."/>
            <person name="Gerhard D.S."/>
            <person name="Goodstein D."/>
            <person name="Graves T."/>
            <person name="Grigoriev I.V."/>
            <person name="Grimwood J."/>
            <person name="Kawashima T."/>
            <person name="Lindquist E."/>
            <person name="Lucas S.M."/>
            <person name="Mead P.E."/>
            <person name="Mitros T."/>
            <person name="Ogino H."/>
            <person name="Ohta Y."/>
            <person name="Poliakov A.V."/>
            <person name="Pollet N."/>
            <person name="Robert J."/>
            <person name="Salamov A."/>
            <person name="Sater A.K."/>
            <person name="Schmutz J."/>
            <person name="Terry A."/>
            <person name="Vize P.D."/>
            <person name="Warren W.C."/>
            <person name="Wells D."/>
            <person name="Wills A."/>
            <person name="Wilson R.K."/>
            <person name="Zimmerman L.B."/>
            <person name="Zorn A.M."/>
            <person name="Grainger R."/>
            <person name="Grammer T."/>
            <person name="Khokha M.K."/>
            <person name="Richardson P.M."/>
            <person name="Rokhsar D.S."/>
        </authorList>
    </citation>
    <scope>NUCLEOTIDE SEQUENCE [LARGE SCALE GENOMIC DNA]</scope>
</reference>
<reference evidence="8" key="2">
    <citation type="submission" date="2007-03" db="EMBL/GenBank/DDBJ databases">
        <authorList>
            <consortium name="NIH - Xenopus Gene Collection (XGC) project"/>
        </authorList>
    </citation>
    <scope>NUCLEOTIDE SEQUENCE [LARGE SCALE MRNA]</scope>
    <source>
        <tissue evidence="8">Brain</tissue>
    </source>
</reference>
<dbReference type="EMBL" id="AAMC01011930">
    <property type="status" value="NOT_ANNOTATED_CDS"/>
    <property type="molecule type" value="Genomic_DNA"/>
</dbReference>
<dbReference type="EMBL" id="BC136091">
    <property type="protein sequence ID" value="AAI36092.1"/>
    <property type="status" value="ALT_INIT"/>
    <property type="molecule type" value="mRNA"/>
</dbReference>
<dbReference type="RefSeq" id="NP_001096423.1">
    <property type="nucleotide sequence ID" value="NM_001102953.1"/>
</dbReference>
<dbReference type="RefSeq" id="XP_012818082.1">
    <property type="nucleotide sequence ID" value="XM_012962628.3"/>
</dbReference>
<dbReference type="SMR" id="A4IIN5"/>
<dbReference type="FunCoup" id="A4IIN5">
    <property type="interactions" value="2034"/>
</dbReference>
<dbReference type="STRING" id="8364.ENSXETP00000021023"/>
<dbReference type="PaxDb" id="8364-ENSXETP00000020367"/>
<dbReference type="DNASU" id="100125029"/>
<dbReference type="GeneID" id="100125029"/>
<dbReference type="KEGG" id="xtr:100125029"/>
<dbReference type="AGR" id="Xenbase:XB-GENE-971012"/>
<dbReference type="CTD" id="678"/>
<dbReference type="Xenbase" id="XB-GENE-971012">
    <property type="gene designation" value="zfp36l2"/>
</dbReference>
<dbReference type="eggNOG" id="KOG1677">
    <property type="taxonomic scope" value="Eukaryota"/>
</dbReference>
<dbReference type="HOGENOM" id="CLU_033040_1_0_1"/>
<dbReference type="InParanoid" id="A4IIN5"/>
<dbReference type="OMA" id="AFYDMDM"/>
<dbReference type="OrthoDB" id="410307at2759"/>
<dbReference type="PhylomeDB" id="A4IIN5"/>
<dbReference type="TreeFam" id="TF315463"/>
<dbReference type="Proteomes" id="UP000008143">
    <property type="component" value="Chromosome 5"/>
</dbReference>
<dbReference type="Bgee" id="ENSXETG00000009274">
    <property type="expression patterns" value="Expressed in neurula embryo and 19 other cell types or tissues"/>
</dbReference>
<dbReference type="GO" id="GO:0005737">
    <property type="term" value="C:cytoplasm"/>
    <property type="evidence" value="ECO:0000250"/>
    <property type="project" value="UniProtKB"/>
</dbReference>
<dbReference type="GO" id="GO:0005634">
    <property type="term" value="C:nucleus"/>
    <property type="evidence" value="ECO:0000250"/>
    <property type="project" value="UniProtKB"/>
</dbReference>
<dbReference type="GO" id="GO:1990904">
    <property type="term" value="C:ribonucleoprotein complex"/>
    <property type="evidence" value="ECO:0007669"/>
    <property type="project" value="UniProtKB-KW"/>
</dbReference>
<dbReference type="GO" id="GO:0035925">
    <property type="term" value="F:mRNA 3'-UTR AU-rich region binding"/>
    <property type="evidence" value="ECO:0000250"/>
    <property type="project" value="UniProtKB"/>
</dbReference>
<dbReference type="GO" id="GO:0008270">
    <property type="term" value="F:zinc ion binding"/>
    <property type="evidence" value="ECO:0007669"/>
    <property type="project" value="UniProtKB-KW"/>
</dbReference>
<dbReference type="GO" id="GO:0061158">
    <property type="term" value="P:3'-UTR-mediated mRNA destabilization"/>
    <property type="evidence" value="ECO:0000250"/>
    <property type="project" value="UniProtKB"/>
</dbReference>
<dbReference type="GO" id="GO:0071364">
    <property type="term" value="P:cellular response to epidermal growth factor stimulus"/>
    <property type="evidence" value="ECO:0000250"/>
    <property type="project" value="UniProtKB"/>
</dbReference>
<dbReference type="GO" id="GO:0044344">
    <property type="term" value="P:cellular response to fibroblast growth factor stimulus"/>
    <property type="evidence" value="ECO:0000250"/>
    <property type="project" value="UniProtKB"/>
</dbReference>
<dbReference type="GO" id="GO:0071385">
    <property type="term" value="P:cellular response to glucocorticoid stimulus"/>
    <property type="evidence" value="ECO:0000250"/>
    <property type="project" value="UniProtKB"/>
</dbReference>
<dbReference type="GO" id="GO:0097011">
    <property type="term" value="P:cellular response to granulocyte macrophage colony-stimulating factor stimulus"/>
    <property type="evidence" value="ECO:0000250"/>
    <property type="project" value="UniProtKB"/>
</dbReference>
<dbReference type="GO" id="GO:0071560">
    <property type="term" value="P:cellular response to transforming growth factor beta stimulus"/>
    <property type="evidence" value="ECO:0000250"/>
    <property type="project" value="UniProtKB"/>
</dbReference>
<dbReference type="GO" id="GO:0071356">
    <property type="term" value="P:cellular response to tumor necrosis factor"/>
    <property type="evidence" value="ECO:0000250"/>
    <property type="project" value="UniProtKB"/>
</dbReference>
<dbReference type="GO" id="GO:1904888">
    <property type="term" value="P:cranial skeletal system development"/>
    <property type="evidence" value="ECO:0007669"/>
    <property type="project" value="Ensembl"/>
</dbReference>
<dbReference type="GO" id="GO:0060216">
    <property type="term" value="P:definitive hemopoiesis"/>
    <property type="evidence" value="ECO:0000250"/>
    <property type="project" value="UniProtKB"/>
</dbReference>
<dbReference type="GO" id="GO:0070371">
    <property type="term" value="P:ERK1 and ERK2 cascade"/>
    <property type="evidence" value="ECO:0000250"/>
    <property type="project" value="UniProtKB"/>
</dbReference>
<dbReference type="GO" id="GO:0030097">
    <property type="term" value="P:hemopoiesis"/>
    <property type="evidence" value="ECO:0000250"/>
    <property type="project" value="UniProtKB"/>
</dbReference>
<dbReference type="GO" id="GO:0000165">
    <property type="term" value="P:MAPK cascade"/>
    <property type="evidence" value="ECO:0000250"/>
    <property type="project" value="UniProtKB"/>
</dbReference>
<dbReference type="GO" id="GO:0006402">
    <property type="term" value="P:mRNA catabolic process"/>
    <property type="evidence" value="ECO:0000250"/>
    <property type="project" value="UniProtKB"/>
</dbReference>
<dbReference type="GO" id="GO:0045599">
    <property type="term" value="P:negative regulation of fat cell differentiation"/>
    <property type="evidence" value="ECO:0000250"/>
    <property type="project" value="UniProtKB"/>
</dbReference>
<dbReference type="GO" id="GO:1901991">
    <property type="term" value="P:negative regulation of mitotic cell cycle phase transition"/>
    <property type="evidence" value="ECO:0000250"/>
    <property type="project" value="UniProtKB"/>
</dbReference>
<dbReference type="GO" id="GO:2000737">
    <property type="term" value="P:negative regulation of stem cell differentiation"/>
    <property type="evidence" value="ECO:0000250"/>
    <property type="project" value="UniProtKB"/>
</dbReference>
<dbReference type="GO" id="GO:0000288">
    <property type="term" value="P:nuclear-transcribed mRNA catabolic process, deadenylation-dependent decay"/>
    <property type="evidence" value="ECO:0000250"/>
    <property type="project" value="UniProtKB"/>
</dbReference>
<dbReference type="GO" id="GO:0031086">
    <property type="term" value="P:nuclear-transcribed mRNA catabolic process, deadenylation-independent decay"/>
    <property type="evidence" value="ECO:0000250"/>
    <property type="project" value="UniProtKB"/>
</dbReference>
<dbReference type="GO" id="GO:1900153">
    <property type="term" value="P:positive regulation of nuclear-transcribed mRNA catabolic process, deadenylation-dependent decay"/>
    <property type="evidence" value="ECO:0000250"/>
    <property type="project" value="UniProtKB"/>
</dbReference>
<dbReference type="GO" id="GO:0048793">
    <property type="term" value="P:pronephros development"/>
    <property type="evidence" value="ECO:0000250"/>
    <property type="project" value="UniProtKB"/>
</dbReference>
<dbReference type="GO" id="GO:0045577">
    <property type="term" value="P:regulation of B cell differentiation"/>
    <property type="evidence" value="ECO:0000250"/>
    <property type="project" value="UniProtKB"/>
</dbReference>
<dbReference type="GO" id="GO:0043488">
    <property type="term" value="P:regulation of mRNA stability"/>
    <property type="evidence" value="ECO:0000250"/>
    <property type="project" value="UniProtKB"/>
</dbReference>
<dbReference type="GO" id="GO:0048103">
    <property type="term" value="P:somatic stem cell division"/>
    <property type="evidence" value="ECO:0000250"/>
    <property type="project" value="UniProtKB"/>
</dbReference>
<dbReference type="GO" id="GO:0035019">
    <property type="term" value="P:somatic stem cell population maintenance"/>
    <property type="evidence" value="ECO:0000250"/>
    <property type="project" value="UniProtKB"/>
</dbReference>
<dbReference type="FunFam" id="4.10.1000.10:FF:000001">
    <property type="entry name" value="zinc finger CCCH domain-containing protein 15-like"/>
    <property type="match status" value="1"/>
</dbReference>
<dbReference type="FunFam" id="4.10.1000.10:FF:000002">
    <property type="entry name" value="Zinc finger protein 36, C3H1 type-like 1"/>
    <property type="match status" value="1"/>
</dbReference>
<dbReference type="Gene3D" id="4.10.1000.10">
    <property type="entry name" value="Zinc finger, CCCH-type"/>
    <property type="match status" value="2"/>
</dbReference>
<dbReference type="InterPro" id="IPR007635">
    <property type="entry name" value="Tis11B_N"/>
</dbReference>
<dbReference type="InterPro" id="IPR045877">
    <property type="entry name" value="ZFP36-like"/>
</dbReference>
<dbReference type="InterPro" id="IPR000571">
    <property type="entry name" value="Znf_CCCH"/>
</dbReference>
<dbReference type="InterPro" id="IPR036855">
    <property type="entry name" value="Znf_CCCH_sf"/>
</dbReference>
<dbReference type="PANTHER" id="PTHR12547">
    <property type="entry name" value="CCCH ZINC FINGER/TIS11-RELATED"/>
    <property type="match status" value="1"/>
</dbReference>
<dbReference type="PANTHER" id="PTHR12547:SF174">
    <property type="entry name" value="MRNA DECAY ACTIVATOR PROTEIN ZFP36L2"/>
    <property type="match status" value="1"/>
</dbReference>
<dbReference type="Pfam" id="PF04553">
    <property type="entry name" value="Tis11B_N"/>
    <property type="match status" value="1"/>
</dbReference>
<dbReference type="Pfam" id="PF00642">
    <property type="entry name" value="zf-CCCH"/>
    <property type="match status" value="2"/>
</dbReference>
<dbReference type="SMART" id="SM00356">
    <property type="entry name" value="ZnF_C3H1"/>
    <property type="match status" value="2"/>
</dbReference>
<dbReference type="SUPFAM" id="SSF90229">
    <property type="entry name" value="CCCH zinc finger"/>
    <property type="match status" value="2"/>
</dbReference>
<dbReference type="PROSITE" id="PS50103">
    <property type="entry name" value="ZF_C3H1"/>
    <property type="match status" value="2"/>
</dbReference>
<comment type="function">
    <text evidence="1 2 3 4">Zinc-finger RNA-binding protein that destabilizes several cytoplasmic AU-rich element (ARE)-containing mRNA transcripts by promoting their poly(A) tail removal or deadenylation, and hence provide a mechanism for attenuating protein synthesis (By similarity). Acts as a 3'-untranslated region (UTR) ARE mRNA-binding adapter protein to communicate signaling events to the mRNA decay machinery (By similarity). Functions by recruiting the CCR4-NOT deadenylase complex and probably other components of the cytoplasmic RNA decay machinery to the bound ARE-containing mRNAs, and hence promotes ARE-mediated mRNA deadenylation and decay processes (By similarity). Binds to 3'-UTR ARE of numerous mRNAs (By similarity). Also induces the degradation of ARE-containing mRNAs even in absence of poly(A) tail (By similarity). Required for tubulogenesis during pronephros development (By similarity).</text>
</comment>
<comment type="subcellular location">
    <subcellularLocation>
        <location evidence="1">Nucleus</location>
    </subcellularLocation>
    <subcellularLocation>
        <location evidence="1">Cytoplasm</location>
    </subcellularLocation>
    <text evidence="1">Shuttles between the nucleus and the cytoplasm in a XPO1/CRM1-dependent manner.</text>
</comment>
<comment type="PTM">
    <text evidence="1 2">Phosphorylated (By similarity).</text>
</comment>
<comment type="sequence caution" evidence="7">
    <conflict type="erroneous initiation">
        <sequence resource="EMBL-CDS" id="AAI36092"/>
    </conflict>
    <text>Truncated N-terminus.</text>
</comment>
<name>TISD_XENTR</name>
<keyword id="KW-0963">Cytoplasm</keyword>
<keyword id="KW-0217">Developmental protein</keyword>
<keyword id="KW-0479">Metal-binding</keyword>
<keyword id="KW-0539">Nucleus</keyword>
<keyword id="KW-1185">Reference proteome</keyword>
<keyword id="KW-0677">Repeat</keyword>
<keyword id="KW-0687">Ribonucleoprotein</keyword>
<keyword id="KW-0694">RNA-binding</keyword>
<keyword id="KW-0862">Zinc</keyword>
<keyword id="KW-0863">Zinc-finger</keyword>
<protein>
    <recommendedName>
        <fullName evidence="7">mRNA decay activator protein ZFP36L2</fullName>
    </recommendedName>
    <alternativeName>
        <fullName>Zinc finger protein 36, C3H1 type-like 2</fullName>
    </alternativeName>
</protein>
<accession>A4IIN5</accession>
<accession>F7CNB8</accession>
<sequence>MSTTLLSAFYDIDLLYKNEKVLNNLALSTMLDKKAVGSPVSSTNSNLFPGFLRRHSASNLQALSGNTNPAKFCPNNNQLKEPAAGSTALLNRENKFRDRSFSENGERSQHLLHLQQQQQQKAGAQVNSTRYKTELCRPFEESGACKYGEKCQFAHGFHELRSLTRHPKYKTELCRTFHTIGFCPYGPRCHFIHNAEERRQAPGAGERPKLHHSLSFSGFPNHSLDSPLLESPTSRTPPPQSSSSLYCQELLQLNNNNNPCANNAFTFSGQELGLIAPLAIHTQNPPYCRQPSSSPPLSFQPLRRVSESPVFDAPPSPPDSLSDRDSYLSGSLSSGSLSGSDSPTLDSNRRLPIFSRLSISDD</sequence>
<evidence type="ECO:0000250" key="1">
    <source>
        <dbReference type="UniProtKB" id="P23949"/>
    </source>
</evidence>
<evidence type="ECO:0000250" key="2">
    <source>
        <dbReference type="UniProtKB" id="P47974"/>
    </source>
</evidence>
<evidence type="ECO:0000250" key="3">
    <source>
        <dbReference type="UniProtKB" id="Q7ZXW9"/>
    </source>
</evidence>
<evidence type="ECO:0000250" key="4">
    <source>
        <dbReference type="UniProtKB" id="Q805B4"/>
    </source>
</evidence>
<evidence type="ECO:0000255" key="5">
    <source>
        <dbReference type="PROSITE-ProRule" id="PRU00723"/>
    </source>
</evidence>
<evidence type="ECO:0000256" key="6">
    <source>
        <dbReference type="SAM" id="MobiDB-lite"/>
    </source>
</evidence>
<evidence type="ECO:0000305" key="7"/>
<evidence type="ECO:0000312" key="8">
    <source>
        <dbReference type="EMBL" id="AAI36092.1"/>
    </source>
</evidence>